<gene>
    <name evidence="6" type="primary">AHL22</name>
    <name evidence="8" type="ordered locus">At2g45430</name>
    <name evidence="9" type="ORF">F4L23.6</name>
</gene>
<reference key="1">
    <citation type="journal article" date="1999" name="Nature">
        <title>Sequence and analysis of chromosome 2 of the plant Arabidopsis thaliana.</title>
        <authorList>
            <person name="Lin X."/>
            <person name="Kaul S."/>
            <person name="Rounsley S.D."/>
            <person name="Shea T.P."/>
            <person name="Benito M.-I."/>
            <person name="Town C.D."/>
            <person name="Fujii C.Y."/>
            <person name="Mason T.M."/>
            <person name="Bowman C.L."/>
            <person name="Barnstead M.E."/>
            <person name="Feldblyum T.V."/>
            <person name="Buell C.R."/>
            <person name="Ketchum K.A."/>
            <person name="Lee J.J."/>
            <person name="Ronning C.M."/>
            <person name="Koo H.L."/>
            <person name="Moffat K.S."/>
            <person name="Cronin L.A."/>
            <person name="Shen M."/>
            <person name="Pai G."/>
            <person name="Van Aken S."/>
            <person name="Umayam L."/>
            <person name="Tallon L.J."/>
            <person name="Gill J.E."/>
            <person name="Adams M.D."/>
            <person name="Carrera A.J."/>
            <person name="Creasy T.H."/>
            <person name="Goodman H.M."/>
            <person name="Somerville C.R."/>
            <person name="Copenhaver G.P."/>
            <person name="Preuss D."/>
            <person name="Nierman W.C."/>
            <person name="White O."/>
            <person name="Eisen J.A."/>
            <person name="Salzberg S.L."/>
            <person name="Fraser C.M."/>
            <person name="Venter J.C."/>
        </authorList>
    </citation>
    <scope>NUCLEOTIDE SEQUENCE [LARGE SCALE GENOMIC DNA]</scope>
    <source>
        <strain>cv. Columbia</strain>
    </source>
</reference>
<reference key="2">
    <citation type="journal article" date="2017" name="Plant J.">
        <title>Araport11: a complete reannotation of the Arabidopsis thaliana reference genome.</title>
        <authorList>
            <person name="Cheng C.Y."/>
            <person name="Krishnakumar V."/>
            <person name="Chan A.P."/>
            <person name="Thibaud-Nissen F."/>
            <person name="Schobel S."/>
            <person name="Town C.D."/>
        </authorList>
    </citation>
    <scope>GENOME REANNOTATION</scope>
    <source>
        <strain>cv. Columbia</strain>
    </source>
</reference>
<reference key="3">
    <citation type="submission" date="2004-11" db="EMBL/GenBank/DDBJ databases">
        <title>Arabidopsis ORF clones.</title>
        <authorList>
            <person name="Kim C.J."/>
            <person name="Chen H."/>
            <person name="Cheuk R.F."/>
            <person name="Shinn P."/>
            <person name="Ecker J.R."/>
        </authorList>
    </citation>
    <scope>NUCLEOTIDE SEQUENCE [LARGE SCALE MRNA]</scope>
    <source>
        <strain>cv. Columbia</strain>
    </source>
</reference>
<reference key="4">
    <citation type="submission" date="2009-03" db="EMBL/GenBank/DDBJ databases">
        <title>ORF cloning and analysis of Arabidopsis transcription factor genes.</title>
        <authorList>
            <person name="Fujita M."/>
            <person name="Mizukado S."/>
            <person name="Seki M."/>
            <person name="Shinozaki K."/>
            <person name="Mitsuda N."/>
            <person name="Takiguchi Y."/>
            <person name="Takagi M."/>
        </authorList>
    </citation>
    <scope>NUCLEOTIDE SEQUENCE [LARGE SCALE MRNA]</scope>
</reference>
<reference key="5">
    <citation type="journal article" date="2004" name="Plant Mol. Biol.">
        <title>Identification of a novel plant MAR DNA binding protein localized on chromosomal surfaces.</title>
        <authorList>
            <person name="Fujimoto S."/>
            <person name="Matsunaga S."/>
            <person name="Yonemura M."/>
            <person name="Uchiyama S."/>
            <person name="Azuma T."/>
            <person name="Fukui K."/>
        </authorList>
    </citation>
    <scope>IDENTIFICATION</scope>
    <scope>GENE FAMILY</scope>
    <scope>NOMENCLATURE</scope>
    <source>
        <strain>cv. Columbia</strain>
    </source>
</reference>
<reference key="6">
    <citation type="journal article" date="2009" name="Plant Mol. Biol.">
        <title>Over-expression of an AT-hook gene, AHL22, delays flowering and inhibits the elongation of the hypocotyl in Arabidopsis thaliana.</title>
        <authorList>
            <person name="Xiao C."/>
            <person name="Chen F."/>
            <person name="Yu X."/>
            <person name="Lin C."/>
            <person name="Fu Y.F."/>
        </authorList>
    </citation>
    <scope>FUNCTION</scope>
    <scope>DISRUPTION PHENOTYPE</scope>
    <scope>TISSUE SPECIFICITY</scope>
    <scope>SUBCELLULAR LOCATION</scope>
</reference>
<reference key="7">
    <citation type="journal article" date="2012" name="J. Biol. Chem.">
        <title>The AT-hook motif-containing protein AHL22 regulates flowering initiation by modifying FLOWERING LOCUS T chromatin in Arabidopsis.</title>
        <authorList>
            <person name="Yun J."/>
            <person name="Kim Y.S."/>
            <person name="Jung J.H."/>
            <person name="Seo P.J."/>
            <person name="Park C.M."/>
        </authorList>
    </citation>
    <scope>FUNCTION</scope>
    <scope>DEVELOPMENTAL STAGE</scope>
    <scope>SUBCELLULAR LOCATION</scope>
    <scope>INTERACTION WITH HDA1/HDA19; HDA6 AND HDA9</scope>
    <scope>SUBUNIT</scope>
</reference>
<reference key="8">
    <citation type="journal article" date="2013" name="Proc. Natl. Acad. Sci. U.S.A.">
        <title>Arabidopsis thaliana AHL family modulates hypocotyl growth redundantly by interacting with each other via the PPC/DUF296 domain.</title>
        <authorList>
            <person name="Zhao J."/>
            <person name="Favero D.S."/>
            <person name="Peng H."/>
            <person name="Neff M.M."/>
        </authorList>
    </citation>
    <scope>GENE FAMILY</scope>
    <scope>DOMAIN PPC</scope>
</reference>
<evidence type="ECO:0000255" key="1">
    <source>
        <dbReference type="PROSITE-ProRule" id="PRU01078"/>
    </source>
</evidence>
<evidence type="ECO:0000256" key="2">
    <source>
        <dbReference type="SAM" id="MobiDB-lite"/>
    </source>
</evidence>
<evidence type="ECO:0000269" key="3">
    <source>
    </source>
</evidence>
<evidence type="ECO:0000269" key="4">
    <source>
    </source>
</evidence>
<evidence type="ECO:0000269" key="5">
    <source>
    </source>
</evidence>
<evidence type="ECO:0000303" key="6">
    <source>
    </source>
</evidence>
<evidence type="ECO:0000305" key="7"/>
<evidence type="ECO:0000312" key="8">
    <source>
        <dbReference type="Araport" id="AT2G45430"/>
    </source>
</evidence>
<evidence type="ECO:0000312" key="9">
    <source>
        <dbReference type="EMBL" id="AAB82621.1"/>
    </source>
</evidence>
<evidence type="ECO:0000312" key="10">
    <source>
        <dbReference type="EMBL" id="FAA00293.1"/>
    </source>
</evidence>
<protein>
    <recommendedName>
        <fullName evidence="10">AT-hook motif nuclear-localized protein 22</fullName>
    </recommendedName>
</protein>
<name>AHL22_ARATH</name>
<proteinExistence type="evidence at protein level"/>
<organism>
    <name type="scientific">Arabidopsis thaliana</name>
    <name type="common">Mouse-ear cress</name>
    <dbReference type="NCBI Taxonomy" id="3702"/>
    <lineage>
        <taxon>Eukaryota</taxon>
        <taxon>Viridiplantae</taxon>
        <taxon>Streptophyta</taxon>
        <taxon>Embryophyta</taxon>
        <taxon>Tracheophyta</taxon>
        <taxon>Spermatophyta</taxon>
        <taxon>Magnoliopsida</taxon>
        <taxon>eudicotyledons</taxon>
        <taxon>Gunneridae</taxon>
        <taxon>Pentapetalae</taxon>
        <taxon>rosids</taxon>
        <taxon>malvids</taxon>
        <taxon>Brassicales</taxon>
        <taxon>Brassicaceae</taxon>
        <taxon>Camelineae</taxon>
        <taxon>Arabidopsis</taxon>
    </lineage>
</organism>
<accession>O22130</accession>
<feature type="chain" id="PRO_0000432040" description="AT-hook motif nuclear-localized protein 22">
    <location>
        <begin position="1"/>
        <end position="317"/>
    </location>
</feature>
<feature type="domain" description="PPC" evidence="1">
    <location>
        <begin position="113"/>
        <end position="253"/>
    </location>
</feature>
<feature type="DNA-binding region" description="A.T hook" evidence="7">
    <location>
        <begin position="89"/>
        <end position="101"/>
    </location>
</feature>
<feature type="region of interest" description="Disordered" evidence="2">
    <location>
        <begin position="22"/>
        <end position="41"/>
    </location>
</feature>
<feature type="region of interest" description="Disordered" evidence="2">
    <location>
        <begin position="48"/>
        <end position="106"/>
    </location>
</feature>
<feature type="region of interest" description="Disordered" evidence="2">
    <location>
        <begin position="258"/>
        <end position="285"/>
    </location>
</feature>
<feature type="compositionally biased region" description="Low complexity" evidence="2">
    <location>
        <begin position="26"/>
        <end position="35"/>
    </location>
</feature>
<feature type="compositionally biased region" description="Basic and acidic residues" evidence="2">
    <location>
        <begin position="48"/>
        <end position="64"/>
    </location>
</feature>
<feature type="compositionally biased region" description="Gly residues" evidence="2">
    <location>
        <begin position="72"/>
        <end position="84"/>
    </location>
</feature>
<feature type="compositionally biased region" description="Low complexity" evidence="2">
    <location>
        <begin position="270"/>
        <end position="282"/>
    </location>
</feature>
<sequence length="317" mass="33519">MDQVSRSLPPPFLSRDLHLHPHHQFQHQQQQQQQNHGHDIDQHRIGGLKRDRDADIDPNEHSSAGKDQSTPGSGGESGGGGGGDNHITRRPRGRPAGSKNKPKPPIIITRDSANALKSHVMEVANGCDVMESVTVFARRRQRGICVLSGNGAVTNVTIRQPASVPGGGSSVVNLHGRFEILSLSGSFLPPPAPPAASGLTIYLAGGQGQVVGGSVVGPLMASGPVVIMAASFGNAAYERLPLEEDDQEEQTAGAVANNIDGNATMGGGTQTQTQTQQQQQQQLMQDPTSFIQGLPPNLMNSVQLPAEAYWGTPRPSF</sequence>
<comment type="function">
    <text evidence="3 4">Transcription factor that specifically binds AT-rich DNA sequences related to the nuclear matrix attachment regions (MARs). Binds an AT-rich DNA sequences in the FLOWERING LOCUS T (FT) promoter (PubMed:22442143). Acts redundantly with AHL18, AHL27 and AHL29 in the regulation of flowering and regulation of the hypocotyl elongation. Plays a role in both photo- and skotomorphogenesis (PubMed:19517252). Acts as a chromatin remodeling factor that modifies the architecture of FLOWERING LOCUS T (FT) chromatin by modulating both H3 acetylation and methylation leading to the regulation of FT expression during flowering induction (PubMed:22442143).</text>
</comment>
<comment type="subunit">
    <text evidence="4">Homodimer. Interacts with HDA1/HDA19, HDA6 and HDA9.</text>
</comment>
<comment type="subcellular location">
    <subcellularLocation>
        <location evidence="3 4">Nucleus</location>
    </subcellularLocation>
</comment>
<comment type="tissue specificity">
    <text evidence="3">Expressed at the hypocotyl-root transition zone and the root hair zone. Also detected in the inflorescence.</text>
</comment>
<comment type="developmental stage">
    <text evidence="4">Highly expressed in earlier growth stages in hypocotyls, roots and the vascular bundles of the leaves. Detected later in the vascular bundles of the basal leaves aera.</text>
</comment>
<comment type="domain">
    <text evidence="5">The PPC domain mediates interactions between AHL proteins.</text>
</comment>
<comment type="disruption phenotype">
    <text evidence="3">Slightly longer hypocotyls.</text>
</comment>
<comment type="miscellaneous">
    <text evidence="3">Overexpression of AHL22 results in delayed flowering and inhibition of hypocotyl growth.</text>
</comment>
<keyword id="KW-0238">DNA-binding</keyword>
<keyword id="KW-0287">Flowering</keyword>
<keyword id="KW-0539">Nucleus</keyword>
<keyword id="KW-1185">Reference proteome</keyword>
<keyword id="KW-0804">Transcription</keyword>
<keyword id="KW-0805">Transcription regulation</keyword>
<dbReference type="EMBL" id="AC002387">
    <property type="protein sequence ID" value="AAB82621.1"/>
    <property type="molecule type" value="Genomic_DNA"/>
</dbReference>
<dbReference type="EMBL" id="CP002685">
    <property type="protein sequence ID" value="AEC10552.1"/>
    <property type="molecule type" value="Genomic_DNA"/>
</dbReference>
<dbReference type="EMBL" id="BT014980">
    <property type="protein sequence ID" value="AAT70431.1"/>
    <property type="molecule type" value="mRNA"/>
</dbReference>
<dbReference type="EMBL" id="BT020250">
    <property type="protein sequence ID" value="AAV74244.1"/>
    <property type="molecule type" value="mRNA"/>
</dbReference>
<dbReference type="EMBL" id="AB493592">
    <property type="protein sequence ID" value="BAH30430.1"/>
    <property type="molecule type" value="mRNA"/>
</dbReference>
<dbReference type="EMBL" id="BR000358">
    <property type="protein sequence ID" value="FAA00293.1"/>
    <property type="molecule type" value="mRNA"/>
</dbReference>
<dbReference type="PIR" id="D84890">
    <property type="entry name" value="D84890"/>
</dbReference>
<dbReference type="RefSeq" id="NP_182067.1">
    <property type="nucleotide sequence ID" value="NM_130105.4"/>
</dbReference>
<dbReference type="SMR" id="O22130"/>
<dbReference type="FunCoup" id="O22130">
    <property type="interactions" value="195"/>
</dbReference>
<dbReference type="STRING" id="3702.O22130"/>
<dbReference type="iPTMnet" id="O22130"/>
<dbReference type="PaxDb" id="3702-AT2G45430.1"/>
<dbReference type="ProteomicsDB" id="244923"/>
<dbReference type="EnsemblPlants" id="AT2G45430.1">
    <property type="protein sequence ID" value="AT2G45430.1"/>
    <property type="gene ID" value="AT2G45430"/>
</dbReference>
<dbReference type="GeneID" id="819151"/>
<dbReference type="Gramene" id="AT2G45430.1">
    <property type="protein sequence ID" value="AT2G45430.1"/>
    <property type="gene ID" value="AT2G45430"/>
</dbReference>
<dbReference type="KEGG" id="ath:AT2G45430"/>
<dbReference type="Araport" id="AT2G45430"/>
<dbReference type="TAIR" id="AT2G45430">
    <property type="gene designation" value="AHL22"/>
</dbReference>
<dbReference type="eggNOG" id="ENOG502QRBV">
    <property type="taxonomic scope" value="Eukaryota"/>
</dbReference>
<dbReference type="HOGENOM" id="CLU_039808_2_1_1"/>
<dbReference type="InParanoid" id="O22130"/>
<dbReference type="OMA" id="QIMGTDP"/>
<dbReference type="PhylomeDB" id="O22130"/>
<dbReference type="PRO" id="PR:O22130"/>
<dbReference type="Proteomes" id="UP000006548">
    <property type="component" value="Chromosome 2"/>
</dbReference>
<dbReference type="ExpressionAtlas" id="O22130">
    <property type="expression patterns" value="baseline and differential"/>
</dbReference>
<dbReference type="GO" id="GO:0005634">
    <property type="term" value="C:nucleus"/>
    <property type="evidence" value="ECO:0000314"/>
    <property type="project" value="UniProtKB"/>
</dbReference>
<dbReference type="GO" id="GO:0042826">
    <property type="term" value="F:histone deacetylase binding"/>
    <property type="evidence" value="ECO:0000353"/>
    <property type="project" value="UniProtKB"/>
</dbReference>
<dbReference type="GO" id="GO:0003680">
    <property type="term" value="F:minor groove of adenine-thymine-rich DNA binding"/>
    <property type="evidence" value="ECO:0000314"/>
    <property type="project" value="UniProtKB"/>
</dbReference>
<dbReference type="GO" id="GO:0009908">
    <property type="term" value="P:flower development"/>
    <property type="evidence" value="ECO:0007669"/>
    <property type="project" value="UniProtKB-KW"/>
</dbReference>
<dbReference type="GO" id="GO:0009640">
    <property type="term" value="P:photomorphogenesis"/>
    <property type="evidence" value="ECO:0000315"/>
    <property type="project" value="TAIR"/>
</dbReference>
<dbReference type="GO" id="GO:0009647">
    <property type="term" value="P:skotomorphogenesis"/>
    <property type="evidence" value="ECO:0000315"/>
    <property type="project" value="TAIR"/>
</dbReference>
<dbReference type="GO" id="GO:0010228">
    <property type="term" value="P:vegetative to reproductive phase transition of meristem"/>
    <property type="evidence" value="ECO:0000315"/>
    <property type="project" value="TAIR"/>
</dbReference>
<dbReference type="CDD" id="cd11378">
    <property type="entry name" value="DUF296"/>
    <property type="match status" value="1"/>
</dbReference>
<dbReference type="FunFam" id="3.30.1330.80:FF:000001">
    <property type="entry name" value="AT-hook motif nuclear-localized protein"/>
    <property type="match status" value="1"/>
</dbReference>
<dbReference type="Gene3D" id="3.30.1330.80">
    <property type="entry name" value="Hypothetical protein, similar to alpha- acetolactate decarboxylase, domain 2"/>
    <property type="match status" value="1"/>
</dbReference>
<dbReference type="InterPro" id="IPR014476">
    <property type="entry name" value="AHL15-29"/>
</dbReference>
<dbReference type="InterPro" id="IPR005175">
    <property type="entry name" value="PPC_dom"/>
</dbReference>
<dbReference type="PANTHER" id="PTHR31100">
    <property type="entry name" value="AT-HOOK MOTIF NUCLEAR-LOCALIZED PROTEIN 15"/>
    <property type="match status" value="1"/>
</dbReference>
<dbReference type="PANTHER" id="PTHR31100:SF2">
    <property type="entry name" value="AT-HOOK MOTIF NUCLEAR-LOCALIZED PROTEIN 18-RELATED"/>
    <property type="match status" value="1"/>
</dbReference>
<dbReference type="Pfam" id="PF03479">
    <property type="entry name" value="PCC"/>
    <property type="match status" value="1"/>
</dbReference>
<dbReference type="PIRSF" id="PIRSF016021">
    <property type="entry name" value="ESCAROLA"/>
    <property type="match status" value="1"/>
</dbReference>
<dbReference type="SUPFAM" id="SSF117856">
    <property type="entry name" value="AF0104/ALDC/Ptd012-like"/>
    <property type="match status" value="1"/>
</dbReference>
<dbReference type="PROSITE" id="PS51742">
    <property type="entry name" value="PPC"/>
    <property type="match status" value="1"/>
</dbReference>